<protein>
    <recommendedName>
        <fullName evidence="2">Histone deacetylase 4</fullName>
        <shortName>HD4</shortName>
        <ecNumber evidence="2">3.5.1.98</ecNumber>
    </recommendedName>
</protein>
<dbReference type="EC" id="3.5.1.98" evidence="2"/>
<dbReference type="EMBL" id="AABR03067902">
    <property type="status" value="NOT_ANNOTATED_CDS"/>
    <property type="molecule type" value="Genomic_DNA"/>
</dbReference>
<dbReference type="EMBL" id="AABR03068091">
    <property type="status" value="NOT_ANNOTATED_CDS"/>
    <property type="molecule type" value="Genomic_DNA"/>
</dbReference>
<dbReference type="EMBL" id="AABR03070452">
    <property type="status" value="NOT_ANNOTATED_CDS"/>
    <property type="molecule type" value="Genomic_DNA"/>
</dbReference>
<dbReference type="EMBL" id="AF321132">
    <property type="protein sequence ID" value="AAK11185.1"/>
    <property type="molecule type" value="mRNA"/>
</dbReference>
<dbReference type="RefSeq" id="NP_445901.1">
    <property type="nucleotide sequence ID" value="NM_053449.1"/>
</dbReference>
<dbReference type="RefSeq" id="XP_063123538.1">
    <property type="nucleotide sequence ID" value="XM_063267468.1"/>
</dbReference>
<dbReference type="SMR" id="Q99P99"/>
<dbReference type="BioGRID" id="264106">
    <property type="interactions" value="4"/>
</dbReference>
<dbReference type="CORUM" id="Q99P99"/>
<dbReference type="FunCoup" id="Q99P99">
    <property type="interactions" value="3445"/>
</dbReference>
<dbReference type="STRING" id="10116.ENSRNOP00000027622"/>
<dbReference type="BindingDB" id="Q99P99"/>
<dbReference type="ChEMBL" id="CHEMBL2095943"/>
<dbReference type="DrugCentral" id="Q99P99"/>
<dbReference type="GlyGen" id="Q99P99">
    <property type="glycosylation" value="1 site"/>
</dbReference>
<dbReference type="iPTMnet" id="Q99P99"/>
<dbReference type="PhosphoSitePlus" id="Q99P99"/>
<dbReference type="PaxDb" id="10116-ENSRNOP00000027622"/>
<dbReference type="GeneID" id="363287"/>
<dbReference type="KEGG" id="rno:363287"/>
<dbReference type="UCSC" id="RGD:619979">
    <property type="organism name" value="rat"/>
</dbReference>
<dbReference type="AGR" id="RGD:619979"/>
<dbReference type="CTD" id="9759"/>
<dbReference type="RGD" id="619979">
    <property type="gene designation" value="Hdac4"/>
</dbReference>
<dbReference type="VEuPathDB" id="HostDB:ENSRNOG00000020372"/>
<dbReference type="eggNOG" id="KOG1343">
    <property type="taxonomic scope" value="Eukaryota"/>
</dbReference>
<dbReference type="HOGENOM" id="CLU_006530_2_0_1"/>
<dbReference type="InParanoid" id="Q99P99"/>
<dbReference type="OrthoDB" id="424012at2759"/>
<dbReference type="PhylomeDB" id="Q99P99"/>
<dbReference type="TreeFam" id="TF106174"/>
<dbReference type="Reactome" id="R-RNO-350054">
    <property type="pathway name" value="Notch-HLH transcription pathway"/>
</dbReference>
<dbReference type="Reactome" id="R-RNO-4090294">
    <property type="pathway name" value="SUMOylation of intracellular receptors"/>
</dbReference>
<dbReference type="Reactome" id="R-RNO-4551638">
    <property type="pathway name" value="SUMOylation of chromatin organization proteins"/>
</dbReference>
<dbReference type="Reactome" id="R-RNO-8951936">
    <property type="pathway name" value="RUNX3 regulates p14-ARF"/>
</dbReference>
<dbReference type="PRO" id="PR:Q99P99"/>
<dbReference type="Proteomes" id="UP000002494">
    <property type="component" value="Chromosome 9"/>
</dbReference>
<dbReference type="Bgee" id="ENSRNOG00000020372">
    <property type="expression patterns" value="Expressed in frontal cortex and 19 other cell types or tissues"/>
</dbReference>
<dbReference type="GO" id="GO:0031672">
    <property type="term" value="C:A band"/>
    <property type="evidence" value="ECO:0000314"/>
    <property type="project" value="MGI"/>
</dbReference>
<dbReference type="GO" id="GO:0042641">
    <property type="term" value="C:actomyosin"/>
    <property type="evidence" value="ECO:0000266"/>
    <property type="project" value="RGD"/>
</dbReference>
<dbReference type="GO" id="GO:0000785">
    <property type="term" value="C:chromatin"/>
    <property type="evidence" value="ECO:0000266"/>
    <property type="project" value="RGD"/>
</dbReference>
<dbReference type="GO" id="GO:0005737">
    <property type="term" value="C:cytoplasm"/>
    <property type="evidence" value="ECO:0000266"/>
    <property type="project" value="RGD"/>
</dbReference>
<dbReference type="GO" id="GO:0005829">
    <property type="term" value="C:cytosol"/>
    <property type="evidence" value="ECO:0000266"/>
    <property type="project" value="RGD"/>
</dbReference>
<dbReference type="GO" id="GO:0000118">
    <property type="term" value="C:histone deacetylase complex"/>
    <property type="evidence" value="ECO:0000266"/>
    <property type="project" value="RGD"/>
</dbReference>
<dbReference type="GO" id="GO:0031594">
    <property type="term" value="C:neuromuscular junction"/>
    <property type="evidence" value="ECO:0000266"/>
    <property type="project" value="RGD"/>
</dbReference>
<dbReference type="GO" id="GO:0005634">
    <property type="term" value="C:nucleus"/>
    <property type="evidence" value="ECO:0000266"/>
    <property type="project" value="RGD"/>
</dbReference>
<dbReference type="GO" id="GO:0032991">
    <property type="term" value="C:protein-containing complex"/>
    <property type="evidence" value="ECO:0000314"/>
    <property type="project" value="RGD"/>
</dbReference>
<dbReference type="GO" id="GO:0030017">
    <property type="term" value="C:sarcomere"/>
    <property type="evidence" value="ECO:0000314"/>
    <property type="project" value="MGI"/>
</dbReference>
<dbReference type="GO" id="GO:0017053">
    <property type="term" value="C:transcription repressor complex"/>
    <property type="evidence" value="ECO:0000266"/>
    <property type="project" value="RGD"/>
</dbReference>
<dbReference type="GO" id="GO:0030018">
    <property type="term" value="C:Z disc"/>
    <property type="evidence" value="ECO:0000314"/>
    <property type="project" value="MGI"/>
</dbReference>
<dbReference type="GO" id="GO:0003682">
    <property type="term" value="F:chromatin binding"/>
    <property type="evidence" value="ECO:0000266"/>
    <property type="project" value="RGD"/>
</dbReference>
<dbReference type="GO" id="GO:0003677">
    <property type="term" value="F:DNA binding"/>
    <property type="evidence" value="ECO:0000266"/>
    <property type="project" value="RGD"/>
</dbReference>
<dbReference type="GO" id="GO:0140297">
    <property type="term" value="F:DNA-binding transcription factor binding"/>
    <property type="evidence" value="ECO:0000266"/>
    <property type="project" value="RGD"/>
</dbReference>
<dbReference type="GO" id="GO:0004407">
    <property type="term" value="F:histone deacetylase activity"/>
    <property type="evidence" value="ECO:0000266"/>
    <property type="project" value="RGD"/>
</dbReference>
<dbReference type="GO" id="GO:0141221">
    <property type="term" value="F:histone deacetylase activity, hydrolytic mechanism"/>
    <property type="evidence" value="ECO:0007669"/>
    <property type="project" value="UniProtKB-EC"/>
</dbReference>
<dbReference type="GO" id="GO:0042826">
    <property type="term" value="F:histone deacetylase binding"/>
    <property type="evidence" value="ECO:0000266"/>
    <property type="project" value="RGD"/>
</dbReference>
<dbReference type="GO" id="GO:0042802">
    <property type="term" value="F:identical protein binding"/>
    <property type="evidence" value="ECO:0000266"/>
    <property type="project" value="RGD"/>
</dbReference>
<dbReference type="GO" id="GO:0060090">
    <property type="term" value="F:molecular adaptor activity"/>
    <property type="evidence" value="ECO:0000266"/>
    <property type="project" value="RGD"/>
</dbReference>
<dbReference type="GO" id="GO:0030955">
    <property type="term" value="F:potassium ion binding"/>
    <property type="evidence" value="ECO:0000266"/>
    <property type="project" value="RGD"/>
</dbReference>
<dbReference type="GO" id="GO:1990841">
    <property type="term" value="F:promoter-specific chromatin binding"/>
    <property type="evidence" value="ECO:0000314"/>
    <property type="project" value="RGD"/>
</dbReference>
<dbReference type="GO" id="GO:0019901">
    <property type="term" value="F:protein kinase binding"/>
    <property type="evidence" value="ECO:0000266"/>
    <property type="project" value="RGD"/>
</dbReference>
<dbReference type="GO" id="GO:0033558">
    <property type="term" value="F:protein lysine deacetylase activity"/>
    <property type="evidence" value="ECO:0000266"/>
    <property type="project" value="RGD"/>
</dbReference>
<dbReference type="GO" id="GO:0000978">
    <property type="term" value="F:RNA polymerase II cis-regulatory region sequence-specific DNA binding"/>
    <property type="evidence" value="ECO:0000266"/>
    <property type="project" value="RGD"/>
</dbReference>
<dbReference type="GO" id="GO:0061629">
    <property type="term" value="F:RNA polymerase II-specific DNA-binding transcription factor binding"/>
    <property type="evidence" value="ECO:0000266"/>
    <property type="project" value="RGD"/>
</dbReference>
<dbReference type="GO" id="GO:0019789">
    <property type="term" value="F:SUMO transferase activity"/>
    <property type="evidence" value="ECO:0000266"/>
    <property type="project" value="RGD"/>
</dbReference>
<dbReference type="GO" id="GO:0003714">
    <property type="term" value="F:transcription corepressor activity"/>
    <property type="evidence" value="ECO:0000266"/>
    <property type="project" value="RGD"/>
</dbReference>
<dbReference type="GO" id="GO:0008270">
    <property type="term" value="F:zinc ion binding"/>
    <property type="evidence" value="ECO:0000266"/>
    <property type="project" value="RGD"/>
</dbReference>
<dbReference type="GO" id="GO:0008283">
    <property type="term" value="P:cell population proliferation"/>
    <property type="evidence" value="ECO:0000266"/>
    <property type="project" value="RGD"/>
</dbReference>
<dbReference type="GO" id="GO:0071260">
    <property type="term" value="P:cellular response to mechanical stimulus"/>
    <property type="evidence" value="ECO:0000270"/>
    <property type="project" value="RGD"/>
</dbReference>
<dbReference type="GO" id="GO:0071374">
    <property type="term" value="P:cellular response to parathyroid hormone stimulus"/>
    <property type="evidence" value="ECO:0000270"/>
    <property type="project" value="RGD"/>
</dbReference>
<dbReference type="GO" id="GO:0071356">
    <property type="term" value="P:cellular response to tumor necrosis factor"/>
    <property type="evidence" value="ECO:0000270"/>
    <property type="project" value="RGD"/>
</dbReference>
<dbReference type="GO" id="GO:0006338">
    <property type="term" value="P:chromatin remodeling"/>
    <property type="evidence" value="ECO:0000266"/>
    <property type="project" value="RGD"/>
</dbReference>
<dbReference type="GO" id="GO:0040029">
    <property type="term" value="P:epigenetic regulation of gene expression"/>
    <property type="evidence" value="ECO:0000318"/>
    <property type="project" value="GO_Central"/>
</dbReference>
<dbReference type="GO" id="GO:0008285">
    <property type="term" value="P:negative regulation of cell population proliferation"/>
    <property type="evidence" value="ECO:0000266"/>
    <property type="project" value="RGD"/>
</dbReference>
<dbReference type="GO" id="GO:0045892">
    <property type="term" value="P:negative regulation of DNA-templated transcription"/>
    <property type="evidence" value="ECO:0000266"/>
    <property type="project" value="RGD"/>
</dbReference>
<dbReference type="GO" id="GO:0045814">
    <property type="term" value="P:negative regulation of gene expression, epigenetic"/>
    <property type="evidence" value="ECO:0000266"/>
    <property type="project" value="RGD"/>
</dbReference>
<dbReference type="GO" id="GO:0045820">
    <property type="term" value="P:negative regulation of glycolytic process"/>
    <property type="evidence" value="ECO:0000266"/>
    <property type="project" value="RGD"/>
</dbReference>
<dbReference type="GO" id="GO:1902894">
    <property type="term" value="P:negative regulation of miRNA transcription"/>
    <property type="evidence" value="ECO:0000266"/>
    <property type="project" value="RGD"/>
</dbReference>
<dbReference type="GO" id="GO:0010832">
    <property type="term" value="P:negative regulation of myotube differentiation"/>
    <property type="evidence" value="ECO:0000266"/>
    <property type="project" value="RGD"/>
</dbReference>
<dbReference type="GO" id="GO:0045668">
    <property type="term" value="P:negative regulation of osteoblast differentiation"/>
    <property type="evidence" value="ECO:0000266"/>
    <property type="project" value="RGD"/>
</dbReference>
<dbReference type="GO" id="GO:0010944">
    <property type="term" value="P:negative regulation of transcription by competitive promoter binding"/>
    <property type="evidence" value="ECO:0000266"/>
    <property type="project" value="RGD"/>
</dbReference>
<dbReference type="GO" id="GO:0000122">
    <property type="term" value="P:negative regulation of transcription by RNA polymerase II"/>
    <property type="evidence" value="ECO:0000266"/>
    <property type="project" value="RGD"/>
</dbReference>
<dbReference type="GO" id="GO:0002076">
    <property type="term" value="P:osteoblast development"/>
    <property type="evidence" value="ECO:0000266"/>
    <property type="project" value="RGD"/>
</dbReference>
<dbReference type="GO" id="GO:0001649">
    <property type="term" value="P:osteoblast differentiation"/>
    <property type="evidence" value="ECO:0000266"/>
    <property type="project" value="RGD"/>
</dbReference>
<dbReference type="GO" id="GO:0008284">
    <property type="term" value="P:positive regulation of cell population proliferation"/>
    <property type="evidence" value="ECO:0000266"/>
    <property type="project" value="RGD"/>
</dbReference>
<dbReference type="GO" id="GO:0045893">
    <property type="term" value="P:positive regulation of DNA-templated transcription"/>
    <property type="evidence" value="ECO:0000266"/>
    <property type="project" value="RGD"/>
</dbReference>
<dbReference type="GO" id="GO:0010592">
    <property type="term" value="P:positive regulation of lamellipodium assembly"/>
    <property type="evidence" value="ECO:0000315"/>
    <property type="project" value="RGD"/>
</dbReference>
<dbReference type="GO" id="GO:1902437">
    <property type="term" value="P:positive regulation of male mating behavior"/>
    <property type="evidence" value="ECO:0000315"/>
    <property type="project" value="RGD"/>
</dbReference>
<dbReference type="GO" id="GO:0043525">
    <property type="term" value="P:positive regulation of neuron apoptotic process"/>
    <property type="evidence" value="ECO:0000315"/>
    <property type="project" value="RGD"/>
</dbReference>
<dbReference type="GO" id="GO:0033235">
    <property type="term" value="P:positive regulation of protein sumoylation"/>
    <property type="evidence" value="ECO:0000266"/>
    <property type="project" value="RGD"/>
</dbReference>
<dbReference type="GO" id="GO:1903428">
    <property type="term" value="P:positive regulation of reactive oxygen species biosynthetic process"/>
    <property type="evidence" value="ECO:0000315"/>
    <property type="project" value="RGD"/>
</dbReference>
<dbReference type="GO" id="GO:0014911">
    <property type="term" value="P:positive regulation of smooth muscle cell migration"/>
    <property type="evidence" value="ECO:0000315"/>
    <property type="project" value="RGD"/>
</dbReference>
<dbReference type="GO" id="GO:0048661">
    <property type="term" value="P:positive regulation of smooth muscle cell proliferation"/>
    <property type="evidence" value="ECO:0000315"/>
    <property type="project" value="RGD"/>
</dbReference>
<dbReference type="GO" id="GO:0045944">
    <property type="term" value="P:positive regulation of transcription by RNA polymerase II"/>
    <property type="evidence" value="ECO:0000266"/>
    <property type="project" value="RGD"/>
</dbReference>
<dbReference type="GO" id="GO:0010882">
    <property type="term" value="P:regulation of cardiac muscle contraction by calcium ion signaling"/>
    <property type="evidence" value="ECO:0000266"/>
    <property type="project" value="RGD"/>
</dbReference>
<dbReference type="GO" id="GO:0048742">
    <property type="term" value="P:regulation of skeletal muscle fiber development"/>
    <property type="evidence" value="ECO:0000266"/>
    <property type="project" value="RGD"/>
</dbReference>
<dbReference type="GO" id="GO:1902809">
    <property type="term" value="P:regulation of skeletal muscle fiber differentiation"/>
    <property type="evidence" value="ECO:0000266"/>
    <property type="project" value="RGD"/>
</dbReference>
<dbReference type="GO" id="GO:0097305">
    <property type="term" value="P:response to alcohol"/>
    <property type="evidence" value="ECO:0000270"/>
    <property type="project" value="RGD"/>
</dbReference>
<dbReference type="GO" id="GO:0014894">
    <property type="term" value="P:response to denervation involved in regulation of muscle adaptation"/>
    <property type="evidence" value="ECO:0000266"/>
    <property type="project" value="RGD"/>
</dbReference>
<dbReference type="GO" id="GO:0070555">
    <property type="term" value="P:response to interleukin-1"/>
    <property type="evidence" value="ECO:0000266"/>
    <property type="project" value="RGD"/>
</dbReference>
<dbReference type="GO" id="GO:0009410">
    <property type="term" value="P:response to xenobiotic stimulus"/>
    <property type="evidence" value="ECO:0000314"/>
    <property type="project" value="RGD"/>
</dbReference>
<dbReference type="GO" id="GO:0001501">
    <property type="term" value="P:skeletal system development"/>
    <property type="evidence" value="ECO:0000266"/>
    <property type="project" value="RGD"/>
</dbReference>
<dbReference type="GO" id="GO:0060337">
    <property type="term" value="P:type I interferon-mediated signaling pathway"/>
    <property type="evidence" value="ECO:0000266"/>
    <property type="project" value="RGD"/>
</dbReference>
<dbReference type="CDD" id="cd10162">
    <property type="entry name" value="ClassIIa_HDAC4_Gln-rich-N"/>
    <property type="match status" value="1"/>
</dbReference>
<dbReference type="CDD" id="cd10006">
    <property type="entry name" value="HDAC4"/>
    <property type="match status" value="1"/>
</dbReference>
<dbReference type="FunFam" id="3.40.800.20:FF:000002">
    <property type="entry name" value="Histone deacetylase"/>
    <property type="match status" value="1"/>
</dbReference>
<dbReference type="Gene3D" id="6.10.250.1550">
    <property type="match status" value="1"/>
</dbReference>
<dbReference type="Gene3D" id="3.40.800.20">
    <property type="entry name" value="Histone deacetylase domain"/>
    <property type="match status" value="1"/>
</dbReference>
<dbReference type="InterPro" id="IPR046949">
    <property type="entry name" value="HDAC4/5/7/9"/>
</dbReference>
<dbReference type="InterPro" id="IPR000286">
    <property type="entry name" value="His_deacetylse"/>
</dbReference>
<dbReference type="InterPro" id="IPR023801">
    <property type="entry name" value="His_deacetylse_dom"/>
</dbReference>
<dbReference type="InterPro" id="IPR037138">
    <property type="entry name" value="His_deacetylse_dom_sf"/>
</dbReference>
<dbReference type="InterPro" id="IPR024643">
    <property type="entry name" value="Hist_deacetylase_Gln_rich_N"/>
</dbReference>
<dbReference type="InterPro" id="IPR023696">
    <property type="entry name" value="Ureohydrolase_dom_sf"/>
</dbReference>
<dbReference type="PANTHER" id="PTHR45364:SF13">
    <property type="entry name" value="HISTONE DEACETYLASE"/>
    <property type="match status" value="1"/>
</dbReference>
<dbReference type="PANTHER" id="PTHR45364">
    <property type="entry name" value="HISTONE DEACETYLASE 9-RELATED"/>
    <property type="match status" value="1"/>
</dbReference>
<dbReference type="Pfam" id="PF12203">
    <property type="entry name" value="HDAC4_Gln"/>
    <property type="match status" value="1"/>
</dbReference>
<dbReference type="Pfam" id="PF00850">
    <property type="entry name" value="Hist_deacetyl"/>
    <property type="match status" value="1"/>
</dbReference>
<dbReference type="PIRSF" id="PIRSF037911">
    <property type="entry name" value="HDAC_II_euk"/>
    <property type="match status" value="1"/>
</dbReference>
<dbReference type="PRINTS" id="PR01270">
    <property type="entry name" value="HDASUPER"/>
</dbReference>
<dbReference type="SUPFAM" id="SSF52768">
    <property type="entry name" value="Arginase/deacetylase"/>
    <property type="match status" value="1"/>
</dbReference>
<sequence length="1077" mass="118652">MSSQSHPDGLSGRDQPVELLNPARVNHMPSTVDVATALPLQVAPAAVPMDLRLDHQFSLPLEPALREQQLQQELLALKQKQQIQRQILIAEFQRQHEQLSRQHEAQLHEHIKQQQEMLAMKHQQELLEHQRKLERHRQEQELEKQHREQKLQQLKNKEKGKESAVASTEVKMKLQEFVLNKKKALAHRNLNHCMSSDPRYWYGKTQHSSLDQSSPPQSGVSASYNHPVLGMYDAKDDFPLRKTASEPNLKLRSRLKQKVAERRSSPLLRRKDGPVATALKKRPLDVTDSACSSAPGSGPSSPNSSSGNVSTENGIAPTVPSTPAETSLAHRLVTREGSVAPLPLYTSPSLPNITLGLPATGPAAGAAGQQDAERLALPALQQRISLFPGTHLTPYLSTSPLERDGGAAHNPLLQHMVLLEQPPTQTPLVTGLGALPLHTQSLVGADRVSPSIHKLRQHRPLGRTQSAPLPQNAQALQHLVIQQQHQQFLEKHKQQFQQQQLHLSKMISKPSEPPRQPESHPEETEEELREHQALLDEPYLDRLPGQKEPSLAGVQVKQEPIESEEEEVEATREAEPSQRPATEQELLFRQQALLLEQQRIHQLRNYQASMEAAGIPVSFGSHRPLSRAQSSPASATFPMSVQEPPTKPRFTTGLVYDTLMLKHQCTCGNTNSHPEHAGRIQSIWSRLQETGLRGKCECIRGRKATLEELQTVHSEAHTLLYGTNPLNRQKLDSSLTSVFVRLPCGGVGVDSDTIWNEVHSSGAARLAVGCVVELVFKVATGELKNGFAVVRPPGHHAEESTPMGFCYFNSVAIAAKLLQQRLNVSKILIVDWDVHHGNGTQQAFYNDPNVLYMSLHRYDDGNFFPGSGAPDEVGTGPGVGFNVNMAFTGGLDPPMGDAEYLAAFRTVVMPIANEFAPDVVLVSSGFDAVEGHPTPLGGYNLSAKCFGYLTKQLMGLAGGRIVLALEGGHDLTAICDASEACVSALLGNELEPLPEKVLHQRPNANAVHSMEKVMGIHSEYWRCLQRLSPTVGHSLIEAQKCENEEAETVTAMASLSVGVKPAEKRSEEEPMEEEPPL</sequence>
<gene>
    <name type="primary">Hdac4</name>
</gene>
<organism>
    <name type="scientific">Rattus norvegicus</name>
    <name type="common">Rat</name>
    <dbReference type="NCBI Taxonomy" id="10116"/>
    <lineage>
        <taxon>Eukaryota</taxon>
        <taxon>Metazoa</taxon>
        <taxon>Chordata</taxon>
        <taxon>Craniata</taxon>
        <taxon>Vertebrata</taxon>
        <taxon>Euteleostomi</taxon>
        <taxon>Mammalia</taxon>
        <taxon>Eutheria</taxon>
        <taxon>Euarchontoglires</taxon>
        <taxon>Glires</taxon>
        <taxon>Rodentia</taxon>
        <taxon>Myomorpha</taxon>
        <taxon>Muroidea</taxon>
        <taxon>Muridae</taxon>
        <taxon>Murinae</taxon>
        <taxon>Rattus</taxon>
    </lineage>
</organism>
<accession>Q99P99</accession>
<name>HDAC4_RAT</name>
<keyword id="KW-0156">Chromatin regulator</keyword>
<keyword id="KW-0175">Coiled coil</keyword>
<keyword id="KW-0963">Cytoplasm</keyword>
<keyword id="KW-0378">Hydrolase</keyword>
<keyword id="KW-1017">Isopeptide bond</keyword>
<keyword id="KW-0479">Metal-binding</keyword>
<keyword id="KW-0539">Nucleus</keyword>
<keyword id="KW-0597">Phosphoprotein</keyword>
<keyword id="KW-1185">Reference proteome</keyword>
<keyword id="KW-0678">Repressor</keyword>
<keyword id="KW-0804">Transcription</keyword>
<keyword id="KW-0805">Transcription regulation</keyword>
<keyword id="KW-0832">Ubl conjugation</keyword>
<keyword id="KW-0862">Zinc</keyword>
<feature type="chain" id="PRO_0000281034" description="Histone deacetylase 4">
    <location>
        <begin position="1"/>
        <end position="1077"/>
    </location>
</feature>
<feature type="region of interest" description="Interaction with MEF2A" evidence="1">
    <location>
        <begin position="117"/>
        <end position="312"/>
    </location>
</feature>
<feature type="region of interest" description="Disordered" evidence="5">
    <location>
        <begin position="132"/>
        <end position="167"/>
    </location>
</feature>
<feature type="region of interest" description="Disordered" evidence="5">
    <location>
        <begin position="204"/>
        <end position="225"/>
    </location>
</feature>
<feature type="region of interest" description="Disordered" evidence="5">
    <location>
        <begin position="239"/>
        <end position="327"/>
    </location>
</feature>
<feature type="region of interest" description="Disordered" evidence="5">
    <location>
        <begin position="508"/>
        <end position="530"/>
    </location>
</feature>
<feature type="region of interest" description="Disordered" evidence="5">
    <location>
        <begin position="542"/>
        <end position="582"/>
    </location>
</feature>
<feature type="region of interest" description="Disordered" evidence="5">
    <location>
        <begin position="623"/>
        <end position="646"/>
    </location>
</feature>
<feature type="region of interest" description="Histone deacetylase" evidence="1">
    <location>
        <begin position="653"/>
        <end position="1077"/>
    </location>
</feature>
<feature type="region of interest" description="Disordered" evidence="5">
    <location>
        <begin position="1052"/>
        <end position="1077"/>
    </location>
</feature>
<feature type="coiled-coil region" evidence="4">
    <location>
        <begin position="66"/>
        <end position="169"/>
    </location>
</feature>
<feature type="short sequence motif" description="PxLPxI/L motif; mediates interaction with ANKRA2 and 14-3-3 proteins" evidence="2">
    <location>
        <begin position="348"/>
        <end position="353"/>
    </location>
</feature>
<feature type="short sequence motif" description="Nuclear export signal" evidence="1">
    <location>
        <begin position="1044"/>
        <end position="1077"/>
    </location>
</feature>
<feature type="compositionally biased region" description="Basic and acidic residues" evidence="5">
    <location>
        <begin position="132"/>
        <end position="162"/>
    </location>
</feature>
<feature type="compositionally biased region" description="Polar residues" evidence="5">
    <location>
        <begin position="205"/>
        <end position="224"/>
    </location>
</feature>
<feature type="compositionally biased region" description="Basic and acidic residues" evidence="5">
    <location>
        <begin position="258"/>
        <end position="273"/>
    </location>
</feature>
<feature type="compositionally biased region" description="Low complexity" evidence="5">
    <location>
        <begin position="289"/>
        <end position="310"/>
    </location>
</feature>
<feature type="compositionally biased region" description="Basic and acidic residues" evidence="5">
    <location>
        <begin position="515"/>
        <end position="530"/>
    </location>
</feature>
<feature type="compositionally biased region" description="Polar residues" evidence="5">
    <location>
        <begin position="627"/>
        <end position="639"/>
    </location>
</feature>
<feature type="active site" evidence="1">
    <location>
        <position position="796"/>
    </location>
</feature>
<feature type="binding site" evidence="1">
    <location>
        <position position="665"/>
    </location>
    <ligand>
        <name>Zn(2+)</name>
        <dbReference type="ChEBI" id="CHEBI:29105"/>
    </ligand>
</feature>
<feature type="binding site" evidence="1">
    <location>
        <position position="667"/>
    </location>
    <ligand>
        <name>Zn(2+)</name>
        <dbReference type="ChEBI" id="CHEBI:29105"/>
    </ligand>
</feature>
<feature type="binding site" evidence="1">
    <location>
        <position position="673"/>
    </location>
    <ligand>
        <name>Zn(2+)</name>
        <dbReference type="ChEBI" id="CHEBI:29105"/>
    </ligand>
</feature>
<feature type="binding site" evidence="1">
    <location>
        <position position="744"/>
    </location>
    <ligand>
        <name>Zn(2+)</name>
        <dbReference type="ChEBI" id="CHEBI:29105"/>
    </ligand>
</feature>
<feature type="modified residue" description="Phosphoserine" evidence="3">
    <location>
        <position position="209"/>
    </location>
</feature>
<feature type="modified residue" description="Phosphoserine; by CaMK4 and SIK1" evidence="2">
    <location>
        <position position="245"/>
    </location>
</feature>
<feature type="modified residue" description="Phosphoserine" evidence="2">
    <location>
        <position position="349"/>
    </location>
</feature>
<feature type="modified residue" description="Phosphoserine; by CaMK4 and SIK1" evidence="2">
    <location>
        <position position="466"/>
    </location>
</feature>
<feature type="modified residue" description="Phosphoserine" evidence="8">
    <location>
        <position position="563"/>
    </location>
</feature>
<feature type="modified residue" description="Phosphoserine" evidence="8">
    <location>
        <position position="630"/>
    </location>
</feature>
<feature type="modified residue" description="Phosphoserine" evidence="2">
    <location>
        <position position="631"/>
    </location>
</feature>
<feature type="cross-link" description="Glycyl lysine isopeptide (Lys-Gly) (interchain with G-Cter in SUMO)" evidence="1">
    <location>
        <position position="557"/>
    </location>
</feature>
<reference key="1">
    <citation type="journal article" date="2004" name="Nature">
        <title>Genome sequence of the Brown Norway rat yields insights into mammalian evolution.</title>
        <authorList>
            <person name="Gibbs R.A."/>
            <person name="Weinstock G.M."/>
            <person name="Metzker M.L."/>
            <person name="Muzny D.M."/>
            <person name="Sodergren E.J."/>
            <person name="Scherer S."/>
            <person name="Scott G."/>
            <person name="Steffen D."/>
            <person name="Worley K.C."/>
            <person name="Burch P.E."/>
            <person name="Okwuonu G."/>
            <person name="Hines S."/>
            <person name="Lewis L."/>
            <person name="Deramo C."/>
            <person name="Delgado O."/>
            <person name="Dugan-Rocha S."/>
            <person name="Miner G."/>
            <person name="Morgan M."/>
            <person name="Hawes A."/>
            <person name="Gill R."/>
            <person name="Holt R.A."/>
            <person name="Adams M.D."/>
            <person name="Amanatides P.G."/>
            <person name="Baden-Tillson H."/>
            <person name="Barnstead M."/>
            <person name="Chin S."/>
            <person name="Evans C.A."/>
            <person name="Ferriera S."/>
            <person name="Fosler C."/>
            <person name="Glodek A."/>
            <person name="Gu Z."/>
            <person name="Jennings D."/>
            <person name="Kraft C.L."/>
            <person name="Nguyen T."/>
            <person name="Pfannkoch C.M."/>
            <person name="Sitter C."/>
            <person name="Sutton G.G."/>
            <person name="Venter J.C."/>
            <person name="Woodage T."/>
            <person name="Smith D."/>
            <person name="Lee H.-M."/>
            <person name="Gustafson E."/>
            <person name="Cahill P."/>
            <person name="Kana A."/>
            <person name="Doucette-Stamm L."/>
            <person name="Weinstock K."/>
            <person name="Fechtel K."/>
            <person name="Weiss R.B."/>
            <person name="Dunn D.M."/>
            <person name="Green E.D."/>
            <person name="Blakesley R.W."/>
            <person name="Bouffard G.G."/>
            <person name="De Jong P.J."/>
            <person name="Osoegawa K."/>
            <person name="Zhu B."/>
            <person name="Marra M."/>
            <person name="Schein J."/>
            <person name="Bosdet I."/>
            <person name="Fjell C."/>
            <person name="Jones S."/>
            <person name="Krzywinski M."/>
            <person name="Mathewson C."/>
            <person name="Siddiqui A."/>
            <person name="Wye N."/>
            <person name="McPherson J."/>
            <person name="Zhao S."/>
            <person name="Fraser C.M."/>
            <person name="Shetty J."/>
            <person name="Shatsman S."/>
            <person name="Geer K."/>
            <person name="Chen Y."/>
            <person name="Abramzon S."/>
            <person name="Nierman W.C."/>
            <person name="Havlak P.H."/>
            <person name="Chen R."/>
            <person name="Durbin K.J."/>
            <person name="Egan A."/>
            <person name="Ren Y."/>
            <person name="Song X.-Z."/>
            <person name="Li B."/>
            <person name="Liu Y."/>
            <person name="Qin X."/>
            <person name="Cawley S."/>
            <person name="Cooney A.J."/>
            <person name="D'Souza L.M."/>
            <person name="Martin K."/>
            <person name="Wu J.Q."/>
            <person name="Gonzalez-Garay M.L."/>
            <person name="Jackson A.R."/>
            <person name="Kalafus K.J."/>
            <person name="McLeod M.P."/>
            <person name="Milosavljevic A."/>
            <person name="Virk D."/>
            <person name="Volkov A."/>
            <person name="Wheeler D.A."/>
            <person name="Zhang Z."/>
            <person name="Bailey J.A."/>
            <person name="Eichler E.E."/>
            <person name="Tuzun E."/>
            <person name="Birney E."/>
            <person name="Mongin E."/>
            <person name="Ureta-Vidal A."/>
            <person name="Woodwark C."/>
            <person name="Zdobnov E."/>
            <person name="Bork P."/>
            <person name="Suyama M."/>
            <person name="Torrents D."/>
            <person name="Alexandersson M."/>
            <person name="Trask B.J."/>
            <person name="Young J.M."/>
            <person name="Huang H."/>
            <person name="Wang H."/>
            <person name="Xing H."/>
            <person name="Daniels S."/>
            <person name="Gietzen D."/>
            <person name="Schmidt J."/>
            <person name="Stevens K."/>
            <person name="Vitt U."/>
            <person name="Wingrove J."/>
            <person name="Camara F."/>
            <person name="Mar Alba M."/>
            <person name="Abril J.F."/>
            <person name="Guigo R."/>
            <person name="Smit A."/>
            <person name="Dubchak I."/>
            <person name="Rubin E.M."/>
            <person name="Couronne O."/>
            <person name="Poliakov A."/>
            <person name="Huebner N."/>
            <person name="Ganten D."/>
            <person name="Goesele C."/>
            <person name="Hummel O."/>
            <person name="Kreitler T."/>
            <person name="Lee Y.-A."/>
            <person name="Monti J."/>
            <person name="Schulz H."/>
            <person name="Zimdahl H."/>
            <person name="Himmelbauer H."/>
            <person name="Lehrach H."/>
            <person name="Jacob H.J."/>
            <person name="Bromberg S."/>
            <person name="Gullings-Handley J."/>
            <person name="Jensen-Seaman M.I."/>
            <person name="Kwitek A.E."/>
            <person name="Lazar J."/>
            <person name="Pasko D."/>
            <person name="Tonellato P.J."/>
            <person name="Twigger S."/>
            <person name="Ponting C.P."/>
            <person name="Duarte J.M."/>
            <person name="Rice S."/>
            <person name="Goodstadt L."/>
            <person name="Beatson S.A."/>
            <person name="Emes R.D."/>
            <person name="Winter E.E."/>
            <person name="Webber C."/>
            <person name="Brandt P."/>
            <person name="Nyakatura G."/>
            <person name="Adetobi M."/>
            <person name="Chiaromonte F."/>
            <person name="Elnitski L."/>
            <person name="Eswara P."/>
            <person name="Hardison R.C."/>
            <person name="Hou M."/>
            <person name="Kolbe D."/>
            <person name="Makova K."/>
            <person name="Miller W."/>
            <person name="Nekrutenko A."/>
            <person name="Riemer C."/>
            <person name="Schwartz S."/>
            <person name="Taylor J."/>
            <person name="Yang S."/>
            <person name="Zhang Y."/>
            <person name="Lindpaintner K."/>
            <person name="Andrews T.D."/>
            <person name="Caccamo M."/>
            <person name="Clamp M."/>
            <person name="Clarke L."/>
            <person name="Curwen V."/>
            <person name="Durbin R.M."/>
            <person name="Eyras E."/>
            <person name="Searle S.M."/>
            <person name="Cooper G.M."/>
            <person name="Batzoglou S."/>
            <person name="Brudno M."/>
            <person name="Sidow A."/>
            <person name="Stone E.A."/>
            <person name="Payseur B.A."/>
            <person name="Bourque G."/>
            <person name="Lopez-Otin C."/>
            <person name="Puente X.S."/>
            <person name="Chakrabarti K."/>
            <person name="Chatterji S."/>
            <person name="Dewey C."/>
            <person name="Pachter L."/>
            <person name="Bray N."/>
            <person name="Yap V.B."/>
            <person name="Caspi A."/>
            <person name="Tesler G."/>
            <person name="Pevzner P.A."/>
            <person name="Haussler D."/>
            <person name="Roskin K.M."/>
            <person name="Baertsch R."/>
            <person name="Clawson H."/>
            <person name="Furey T.S."/>
            <person name="Hinrichs A.S."/>
            <person name="Karolchik D."/>
            <person name="Kent W.J."/>
            <person name="Rosenbloom K.R."/>
            <person name="Trumbower H."/>
            <person name="Weirauch M."/>
            <person name="Cooper D.N."/>
            <person name="Stenson P.D."/>
            <person name="Ma B."/>
            <person name="Brent M."/>
            <person name="Arumugam M."/>
            <person name="Shteynberg D."/>
            <person name="Copley R.R."/>
            <person name="Taylor M.S."/>
            <person name="Riethman H."/>
            <person name="Mudunuri U."/>
            <person name="Peterson J."/>
            <person name="Guyer M."/>
            <person name="Felsenfeld A."/>
            <person name="Old S."/>
            <person name="Mockrin S."/>
            <person name="Collins F.S."/>
        </authorList>
    </citation>
    <scope>NUCLEOTIDE SEQUENCE [LARGE SCALE GENOMIC DNA]</scope>
    <source>
        <strain>Brown Norway</strain>
    </source>
</reference>
<reference key="2">
    <citation type="submission" date="2000-11" db="EMBL/GenBank/DDBJ databases">
        <title>Expression pattern of rat histone deacetylases.</title>
        <authorList>
            <person name="Wilquet V."/>
            <person name="Chavez M."/>
            <person name="Korbers R."/>
            <person name="Geerts A."/>
        </authorList>
    </citation>
    <scope>NUCLEOTIDE SEQUENCE [MRNA] OF 55-208</scope>
    <source>
        <strain>Wistar</strain>
        <tissue>Testis</tissue>
    </source>
</reference>
<reference key="3">
    <citation type="journal article" date="2005" name="J. Neurochem.">
        <title>The POZ/BTB protein NAC1 interacts with two different histone deacetylases in neuronal-like cultures.</title>
        <authorList>
            <person name="Korutla L."/>
            <person name="Wang P.J."/>
            <person name="Mackler S.A."/>
        </authorList>
    </citation>
    <scope>INTERACTION WITH BTBD14B</scope>
</reference>
<reference key="4">
    <citation type="journal article" date="2012" name="Nat. Commun.">
        <title>Quantitative maps of protein phosphorylation sites across 14 different rat organs and tissues.</title>
        <authorList>
            <person name="Lundby A."/>
            <person name="Secher A."/>
            <person name="Lage K."/>
            <person name="Nordsborg N.B."/>
            <person name="Dmytriyev A."/>
            <person name="Lundby C."/>
            <person name="Olsen J.V."/>
        </authorList>
    </citation>
    <scope>PHOSPHORYLATION [LARGE SCALE ANALYSIS] AT SER-563 AND SER-630</scope>
    <scope>IDENTIFICATION BY MASS SPECTROMETRY [LARGE SCALE ANALYSIS]</scope>
</reference>
<proteinExistence type="evidence at protein level"/>
<evidence type="ECO:0000250" key="1"/>
<evidence type="ECO:0000250" key="2">
    <source>
        <dbReference type="UniProtKB" id="P56524"/>
    </source>
</evidence>
<evidence type="ECO:0000250" key="3">
    <source>
        <dbReference type="UniProtKB" id="Q6NZM9"/>
    </source>
</evidence>
<evidence type="ECO:0000255" key="4"/>
<evidence type="ECO:0000256" key="5">
    <source>
        <dbReference type="SAM" id="MobiDB-lite"/>
    </source>
</evidence>
<evidence type="ECO:0000269" key="6">
    <source>
    </source>
</evidence>
<evidence type="ECO:0000305" key="7"/>
<evidence type="ECO:0007744" key="8">
    <source>
    </source>
</evidence>
<comment type="function">
    <text evidence="2">Responsible for the deacetylation of lysine residues on the N-terminal part of the core histones (H2A, H2B, H3 and H4). Histone deacetylation gives a tag for epigenetic repression and plays an important role in transcriptional regulation, cell cycle progression and developmental events. Histone deacetylases act via the formation of large multiprotein complexes. Involved in muscle maturation via its interaction with the myocyte enhancer factors such as MEF2A, MEF2C and MEF2D. Deacetylates HSPA1A and HSPA1B at 'Lys-77' leading to their preferential binding to co-chaperone STUB1.</text>
</comment>
<comment type="catalytic activity">
    <reaction evidence="2">
        <text>N(6)-acetyl-L-lysyl-[histone] + H2O = L-lysyl-[histone] + acetate</text>
        <dbReference type="Rhea" id="RHEA:58196"/>
        <dbReference type="Rhea" id="RHEA-COMP:9845"/>
        <dbReference type="Rhea" id="RHEA-COMP:11338"/>
        <dbReference type="ChEBI" id="CHEBI:15377"/>
        <dbReference type="ChEBI" id="CHEBI:29969"/>
        <dbReference type="ChEBI" id="CHEBI:30089"/>
        <dbReference type="ChEBI" id="CHEBI:61930"/>
        <dbReference type="EC" id="3.5.1.98"/>
    </reaction>
    <physiologicalReaction direction="left-to-right" evidence="2">
        <dbReference type="Rhea" id="RHEA:58197"/>
    </physiologicalReaction>
</comment>
<comment type="subunit">
    <text evidence="2 3 6">Homodimer. Homodimerization via its N-terminal domain. Interacts with HDAC7. Interacts with MEF2A, MEF2C, MEF2D, MORC2 and NR2C1. Interacts with a 14-3-3 chaperone proteins in a phosphorylation dependent manner. Interacts with 14-3-3 protein YWHAB (By similarity). Interacts with KDM5B and AHRR (By similarity). Interacts with BTBD14B (PubMed:16033423). Interacts with MYOCD. Interacts (via PxLPxI/L motif) with ANKRA2 (via ankyrin repeats). Interacts with CUL7 (as part of the 3M complex); negatively regulated by ANKRA2. Interacts with EP300 in the presence of TFAP2C. Interacts with HSPA1A and HSPA1B leading to their deacetylation at 'Lys-77' (By similarity). Interacts with ZBTB7B; the interaction allows the recruitment of HDAC4 on CD8 loci for deacetylation and possible inhibition of CD8 genes expression (By similarity). Interacts with DHX36 (By similarity). Interacts with SIK3; this interaction leads to HDAC4 retention in the cytoplasm (By similarity).</text>
</comment>
<comment type="subcellular location">
    <subcellularLocation>
        <location>Nucleus</location>
    </subcellularLocation>
    <subcellularLocation>
        <location>Cytoplasm</location>
    </subcellularLocation>
    <text evidence="1 3">Shuttles between the nucleus and the cytoplasm. Upon muscle cells differentiation, it accumulates in the nuclei of myotubes, suggesting a positive role of nuclear HDAC4 in muscle differentiation. The export to cytoplasm depends on the interaction with a 14-3-3 chaperone protein and is due to its phosphorylation at Ser-245, Ser-466 and Ser-630 by CaMK4 and SIK1. The nuclear localization probably depends on sumoylation (By similarity). Interaction with SIK3 leads to HDAC4 retention in the cytoplasm (By similarity). Interacts with ZNF638 (By similarity).</text>
</comment>
<comment type="domain">
    <text evidence="1">The nuclear export sequence mediates the shuttling between the nucleus and the cytoplasm.</text>
</comment>
<comment type="domain">
    <text evidence="2">The PxLPxI/L motif mediates interaction with ankyrin repeats of ANKRA2.</text>
</comment>
<comment type="PTM">
    <text evidence="2">Phosphorylated by CaMK4 at Ser-245, Ser-466 and Ser-630. Phosphorylation at other residues by CaMK2D is required for the interaction with 14-3-3. Phosphorylation at Ser-349, within the PxLPxI/L motif, impairs the binding of ANKRA2 but generates a high-affinity docking site for 14-3-3 (By similarity).</text>
</comment>
<comment type="PTM">
    <text>Sumoylation on Lys-557 is promoted by the E3 SUMO-protein ligase RANBP2, and prevented by phosphorylation by CaMK4.</text>
</comment>
<comment type="similarity">
    <text evidence="7">Belongs to the histone deacetylase family. HD type 2 subfamily.</text>
</comment>